<dbReference type="EMBL" id="AC007017">
    <property type="protein sequence ID" value="AAD21471.1"/>
    <property type="status" value="ALT_SEQ"/>
    <property type="molecule type" value="Genomic_DNA"/>
</dbReference>
<dbReference type="EMBL" id="CP002685">
    <property type="protein sequence ID" value="AEC09172.1"/>
    <property type="molecule type" value="Genomic_DNA"/>
</dbReference>
<dbReference type="EMBL" id="AY093189">
    <property type="protein sequence ID" value="AAM13188.1"/>
    <property type="molecule type" value="mRNA"/>
</dbReference>
<dbReference type="EMBL" id="BT006590">
    <property type="protein sequence ID" value="AAP31934.1"/>
    <property type="molecule type" value="mRNA"/>
</dbReference>
<dbReference type="PIR" id="H84773">
    <property type="entry name" value="H84773"/>
</dbReference>
<dbReference type="RefSeq" id="NP_850253.1">
    <property type="nucleotide sequence ID" value="NM_179922.2"/>
</dbReference>
<dbReference type="SMR" id="Q8RWC5"/>
<dbReference type="BioGRID" id="3503">
    <property type="interactions" value="1"/>
</dbReference>
<dbReference type="FunCoup" id="Q8RWC5">
    <property type="interactions" value="4"/>
</dbReference>
<dbReference type="STRING" id="3702.Q8RWC5"/>
<dbReference type="GlyCosmos" id="Q8RWC5">
    <property type="glycosylation" value="2 sites, No reported glycans"/>
</dbReference>
<dbReference type="GlyGen" id="Q8RWC5">
    <property type="glycosylation" value="2 sites"/>
</dbReference>
<dbReference type="iPTMnet" id="Q8RWC5"/>
<dbReference type="PaxDb" id="3702-AT2G35860.1"/>
<dbReference type="ProteomicsDB" id="228935"/>
<dbReference type="EnsemblPlants" id="AT2G35860.1">
    <property type="protein sequence ID" value="AT2G35860.1"/>
    <property type="gene ID" value="AT2G35860"/>
</dbReference>
<dbReference type="GeneID" id="818159"/>
<dbReference type="Gramene" id="AT2G35860.1">
    <property type="protein sequence ID" value="AT2G35860.1"/>
    <property type="gene ID" value="AT2G35860"/>
</dbReference>
<dbReference type="KEGG" id="ath:AT2G35860"/>
<dbReference type="Araport" id="AT2G35860"/>
<dbReference type="TAIR" id="AT2G35860">
    <property type="gene designation" value="FLA16"/>
</dbReference>
<dbReference type="eggNOG" id="KOG1437">
    <property type="taxonomic scope" value="Eukaryota"/>
</dbReference>
<dbReference type="HOGENOM" id="CLU_047484_0_0_1"/>
<dbReference type="InParanoid" id="Q8RWC5"/>
<dbReference type="OMA" id="IYDAMSP"/>
<dbReference type="PhylomeDB" id="Q8RWC5"/>
<dbReference type="PRO" id="PR:Q8RWC5"/>
<dbReference type="Proteomes" id="UP000006548">
    <property type="component" value="Chromosome 2"/>
</dbReference>
<dbReference type="ExpressionAtlas" id="Q8RWC5">
    <property type="expression patterns" value="baseline and differential"/>
</dbReference>
<dbReference type="GO" id="GO:0005576">
    <property type="term" value="C:extracellular region"/>
    <property type="evidence" value="ECO:0007669"/>
    <property type="project" value="UniProtKB-SubCell"/>
</dbReference>
<dbReference type="FunFam" id="2.30.180.10:FF:000011">
    <property type="entry name" value="Fasciclin-like arabinogalactan protein 16"/>
    <property type="match status" value="1"/>
</dbReference>
<dbReference type="Gene3D" id="2.30.180.10">
    <property type="entry name" value="FAS1 domain"/>
    <property type="match status" value="2"/>
</dbReference>
<dbReference type="InterPro" id="IPR036378">
    <property type="entry name" value="FAS1_dom_sf"/>
</dbReference>
<dbReference type="InterPro" id="IPR000782">
    <property type="entry name" value="FAS1_domain"/>
</dbReference>
<dbReference type="InterPro" id="IPR044654">
    <property type="entry name" value="FLA15/16/17/18"/>
</dbReference>
<dbReference type="PANTHER" id="PTHR32499">
    <property type="entry name" value="FASCICLIN-LIKE ARABINOGALACTAN PROTEIN 16"/>
    <property type="match status" value="1"/>
</dbReference>
<dbReference type="PANTHER" id="PTHR32499:SF3">
    <property type="entry name" value="FASCICLIN-LIKE ARABINOGALACTAN PROTEIN 16"/>
    <property type="match status" value="1"/>
</dbReference>
<dbReference type="Pfam" id="PF02469">
    <property type="entry name" value="Fasciclin"/>
    <property type="match status" value="2"/>
</dbReference>
<dbReference type="SMART" id="SM00554">
    <property type="entry name" value="FAS1"/>
    <property type="match status" value="2"/>
</dbReference>
<dbReference type="SUPFAM" id="SSF82153">
    <property type="entry name" value="FAS1 domain"/>
    <property type="match status" value="2"/>
</dbReference>
<dbReference type="PROSITE" id="PS50213">
    <property type="entry name" value="FAS1"/>
    <property type="match status" value="2"/>
</dbReference>
<gene>
    <name type="primary">FLA16</name>
    <name type="ordered locus">At2g35860</name>
    <name type="ORF">F11F19.23</name>
</gene>
<feature type="signal peptide" evidence="1">
    <location>
        <begin position="1"/>
        <end position="23"/>
    </location>
</feature>
<feature type="chain" id="PRO_0000253876" description="Fasciclin-like arabinogalactan protein 16">
    <location>
        <begin position="24"/>
        <end position="445"/>
    </location>
</feature>
<feature type="domain" description="FAS1 1" evidence="2">
    <location>
        <begin position="35"/>
        <end position="173"/>
    </location>
</feature>
<feature type="domain" description="FAS1 2" evidence="2">
    <location>
        <begin position="257"/>
        <end position="400"/>
    </location>
</feature>
<feature type="glycosylation site" description="N-linked (GlcNAc...) asparagine" evidence="1">
    <location>
        <position position="72"/>
    </location>
</feature>
<feature type="glycosylation site" description="N-linked (GlcNAc...) asparagine" evidence="1">
    <location>
        <position position="279"/>
    </location>
</feature>
<keyword id="KW-0325">Glycoprotein</keyword>
<keyword id="KW-0654">Proteoglycan</keyword>
<keyword id="KW-1185">Reference proteome</keyword>
<keyword id="KW-0677">Repeat</keyword>
<keyword id="KW-0964">Secreted</keyword>
<keyword id="KW-0732">Signal</keyword>
<sequence length="445" mass="49100">MDSSYGATKFLLLLFLTTSIATALPDNKPVPGQINSNSVLVALLDSHYTELAELVEKALLLQTLEEAVGKHNITIFAPRNDALERNLDPLFKSFLLEPRNLKSLQSLLMFHILPKRITSPQWPSLSHHHRTLSNDHLHLTVDVNTLKVDSAEIIRPDDVIRPDGIIHGIERLLIPRSVQEDFNRRRSLRSISAVIPEGAPEVDPRTHRLKKPSPAVPAGAPPVLPIYDAMSPGPSLAPAPAPGPGGPRGHFNGDAQVKDFIHTLLHYGGYNEMADILVNLTSLATEMGRLVSEGYVLTVLAPNDEAMAKLTTDQLSEPGAPEQIMYYHIIPEYQTEESMYNAVRRFGKVKYDSLRFPHKVLAQEADGSVKFGHGDGSAYLFDPDIYTDGRISVQGIDGVLFPKEETPATEIKPAAPVVKKVSKSRRGKLMEVACRMMGSRFIPCQ</sequence>
<comment type="function">
    <text>May be a cell surface adhesion protein.</text>
</comment>
<comment type="subcellular location">
    <subcellularLocation>
        <location evidence="3">Secreted</location>
    </subcellularLocation>
</comment>
<comment type="similarity">
    <text evidence="3">Belongs to the fasciclin-like AGP family.</text>
</comment>
<comment type="sequence caution" evidence="3">
    <conflict type="erroneous gene model prediction">
        <sequence resource="EMBL-CDS" id="AAD21471"/>
    </conflict>
</comment>
<evidence type="ECO:0000255" key="1"/>
<evidence type="ECO:0000255" key="2">
    <source>
        <dbReference type="PROSITE-ProRule" id="PRU00082"/>
    </source>
</evidence>
<evidence type="ECO:0000305" key="3"/>
<accession>Q8RWC5</accession>
<accession>Q9SJ64</accession>
<organism>
    <name type="scientific">Arabidopsis thaliana</name>
    <name type="common">Mouse-ear cress</name>
    <dbReference type="NCBI Taxonomy" id="3702"/>
    <lineage>
        <taxon>Eukaryota</taxon>
        <taxon>Viridiplantae</taxon>
        <taxon>Streptophyta</taxon>
        <taxon>Embryophyta</taxon>
        <taxon>Tracheophyta</taxon>
        <taxon>Spermatophyta</taxon>
        <taxon>Magnoliopsida</taxon>
        <taxon>eudicotyledons</taxon>
        <taxon>Gunneridae</taxon>
        <taxon>Pentapetalae</taxon>
        <taxon>rosids</taxon>
        <taxon>malvids</taxon>
        <taxon>Brassicales</taxon>
        <taxon>Brassicaceae</taxon>
        <taxon>Camelineae</taxon>
        <taxon>Arabidopsis</taxon>
    </lineage>
</organism>
<proteinExistence type="evidence at transcript level"/>
<reference key="1">
    <citation type="journal article" date="1999" name="Nature">
        <title>Sequence and analysis of chromosome 2 of the plant Arabidopsis thaliana.</title>
        <authorList>
            <person name="Lin X."/>
            <person name="Kaul S."/>
            <person name="Rounsley S.D."/>
            <person name="Shea T.P."/>
            <person name="Benito M.-I."/>
            <person name="Town C.D."/>
            <person name="Fujii C.Y."/>
            <person name="Mason T.M."/>
            <person name="Bowman C.L."/>
            <person name="Barnstead M.E."/>
            <person name="Feldblyum T.V."/>
            <person name="Buell C.R."/>
            <person name="Ketchum K.A."/>
            <person name="Lee J.J."/>
            <person name="Ronning C.M."/>
            <person name="Koo H.L."/>
            <person name="Moffat K.S."/>
            <person name="Cronin L.A."/>
            <person name="Shen M."/>
            <person name="Pai G."/>
            <person name="Van Aken S."/>
            <person name="Umayam L."/>
            <person name="Tallon L.J."/>
            <person name="Gill J.E."/>
            <person name="Adams M.D."/>
            <person name="Carrera A.J."/>
            <person name="Creasy T.H."/>
            <person name="Goodman H.M."/>
            <person name="Somerville C.R."/>
            <person name="Copenhaver G.P."/>
            <person name="Preuss D."/>
            <person name="Nierman W.C."/>
            <person name="White O."/>
            <person name="Eisen J.A."/>
            <person name="Salzberg S.L."/>
            <person name="Fraser C.M."/>
            <person name="Venter J.C."/>
        </authorList>
    </citation>
    <scope>NUCLEOTIDE SEQUENCE [LARGE SCALE GENOMIC DNA]</scope>
    <source>
        <strain>cv. Columbia</strain>
    </source>
</reference>
<reference key="2">
    <citation type="journal article" date="2017" name="Plant J.">
        <title>Araport11: a complete reannotation of the Arabidopsis thaliana reference genome.</title>
        <authorList>
            <person name="Cheng C.Y."/>
            <person name="Krishnakumar V."/>
            <person name="Chan A.P."/>
            <person name="Thibaud-Nissen F."/>
            <person name="Schobel S."/>
            <person name="Town C.D."/>
        </authorList>
    </citation>
    <scope>GENOME REANNOTATION</scope>
    <source>
        <strain>cv. Columbia</strain>
    </source>
</reference>
<reference key="3">
    <citation type="journal article" date="2003" name="Science">
        <title>Empirical analysis of transcriptional activity in the Arabidopsis genome.</title>
        <authorList>
            <person name="Yamada K."/>
            <person name="Lim J."/>
            <person name="Dale J.M."/>
            <person name="Chen H."/>
            <person name="Shinn P."/>
            <person name="Palm C.J."/>
            <person name="Southwick A.M."/>
            <person name="Wu H.C."/>
            <person name="Kim C.J."/>
            <person name="Nguyen M."/>
            <person name="Pham P.K."/>
            <person name="Cheuk R.F."/>
            <person name="Karlin-Newmann G."/>
            <person name="Liu S.X."/>
            <person name="Lam B."/>
            <person name="Sakano H."/>
            <person name="Wu T."/>
            <person name="Yu G."/>
            <person name="Miranda M."/>
            <person name="Quach H.L."/>
            <person name="Tripp M."/>
            <person name="Chang C.H."/>
            <person name="Lee J.M."/>
            <person name="Toriumi M.J."/>
            <person name="Chan M.M."/>
            <person name="Tang C.C."/>
            <person name="Onodera C.S."/>
            <person name="Deng J.M."/>
            <person name="Akiyama K."/>
            <person name="Ansari Y."/>
            <person name="Arakawa T."/>
            <person name="Banh J."/>
            <person name="Banno F."/>
            <person name="Bowser L."/>
            <person name="Brooks S.Y."/>
            <person name="Carninci P."/>
            <person name="Chao Q."/>
            <person name="Choy N."/>
            <person name="Enju A."/>
            <person name="Goldsmith A.D."/>
            <person name="Gurjal M."/>
            <person name="Hansen N.F."/>
            <person name="Hayashizaki Y."/>
            <person name="Johnson-Hopson C."/>
            <person name="Hsuan V.W."/>
            <person name="Iida K."/>
            <person name="Karnes M."/>
            <person name="Khan S."/>
            <person name="Koesema E."/>
            <person name="Ishida J."/>
            <person name="Jiang P.X."/>
            <person name="Jones T."/>
            <person name="Kawai J."/>
            <person name="Kamiya A."/>
            <person name="Meyers C."/>
            <person name="Nakajima M."/>
            <person name="Narusaka M."/>
            <person name="Seki M."/>
            <person name="Sakurai T."/>
            <person name="Satou M."/>
            <person name="Tamse R."/>
            <person name="Vaysberg M."/>
            <person name="Wallender E.K."/>
            <person name="Wong C."/>
            <person name="Yamamura Y."/>
            <person name="Yuan S."/>
            <person name="Shinozaki K."/>
            <person name="Davis R.W."/>
            <person name="Theologis A."/>
            <person name="Ecker J.R."/>
        </authorList>
    </citation>
    <scope>NUCLEOTIDE SEQUENCE [LARGE SCALE MRNA]</scope>
    <source>
        <strain>cv. Columbia</strain>
    </source>
</reference>
<reference key="4">
    <citation type="journal article" date="2003" name="Plant Physiol.">
        <title>The fasciclin-like arabinogalactan proteins of Arabidopsis. A multigene family of putative cell adhesion molecules.</title>
        <authorList>
            <person name="Johnson K.L."/>
            <person name="Jones B.J."/>
            <person name="Bacic A."/>
            <person name="Schultz C.J."/>
        </authorList>
    </citation>
    <scope>GENE FAMILY ORGANIZATION</scope>
    <scope>NOMENCLATURE</scope>
</reference>
<protein>
    <recommendedName>
        <fullName>Fasciclin-like arabinogalactan protein 16</fullName>
    </recommendedName>
</protein>
<name>FLA16_ARATH</name>